<accession>A5PK74</accession>
<sequence length="667" mass="74349">MDGLRASAGLLRRGRLRRRRQQQPHSGSVLALPLRPRKIRRQLRRSVSSRMAALRAQTLQSEDSEDSRVESTVGEPGDPLAGGTAALSDATGREPHGQLGPVELLEASPASRSLQTPRALVEAQTPAARLVEAQTPAARLVEAHTPAARLVEAHTPPARLVEASALPARLVETSALLCSTQHLAAVPPSVAPAMLSGPQGESTGEELPWDSPLQRILAELNRIPSSRRRAARLFEWLISPMPPDHFYRRLWEREAVLVRRQDHSYYQGLFSTAVLDSILRNEEVQFGQHLDAARYINGRRETLNPPGRALPAAAWSLYRAGCSLRLLCPQAFSTTVWQFLAVLQEQFGSMAGSNVYLTPPNSQGFAPHYDDIEAFVLQLEGRKLWRVYRPRVPTEELALTSSPNFSQDDLGEPVLQTVLEPGDLLYFPRGFIHQAECQDGVHSLHLTLSTFQRNTWGDFLEAVLPLAVQAAMEENVEFRRGLPRDFMDYMGAQHSDSKDPRRTAFMEKVRVLVARLGHFAPVDAVADQRAKDFIHDSLPPVLTDRERALSVYGLPIRWEAGEPVNVGAQLTTETEVHMLQDGIARLVGEGGHLFLYYTVENSRVYHLEEPKCLEIYPQQADAMELLLRSYPEFVRVGDLPCDTVEDQLSLATMLYDKGLLLTKMPLT</sequence>
<reference key="1">
    <citation type="submission" date="2007-06" db="EMBL/GenBank/DDBJ databases">
        <authorList>
            <consortium name="NIH - Mammalian Gene Collection (MGC) project"/>
        </authorList>
    </citation>
    <scope>NUCLEOTIDE SEQUENCE [LARGE SCALE MRNA]</scope>
    <source>
        <strain>Hereford</strain>
        <tissue>Thymus</tissue>
    </source>
</reference>
<name>RIOX1_BOVIN</name>
<keyword id="KW-0007">Acetylation</keyword>
<keyword id="KW-0156">Chromatin regulator</keyword>
<keyword id="KW-0223">Dioxygenase</keyword>
<keyword id="KW-0408">Iron</keyword>
<keyword id="KW-0479">Metal-binding</keyword>
<keyword id="KW-0539">Nucleus</keyword>
<keyword id="KW-0560">Oxidoreductase</keyword>
<keyword id="KW-0597">Phosphoprotein</keyword>
<keyword id="KW-1185">Reference proteome</keyword>
<keyword id="KW-0678">Repressor</keyword>
<keyword id="KW-0804">Transcription</keyword>
<keyword id="KW-0805">Transcription regulation</keyword>
<feature type="chain" id="PRO_0000390975" description="Ribosomal oxygenase 1">
    <location>
        <begin position="1"/>
        <end position="667"/>
    </location>
</feature>
<feature type="domain" description="JmjC" evidence="4">
    <location>
        <begin position="322"/>
        <end position="467"/>
    </location>
</feature>
<feature type="region of interest" description="Disordered" evidence="5">
    <location>
        <begin position="1"/>
        <end position="99"/>
    </location>
</feature>
<feature type="compositionally biased region" description="Low complexity" evidence="5">
    <location>
        <begin position="1"/>
        <end position="11"/>
    </location>
</feature>
<feature type="compositionally biased region" description="Basic residues" evidence="5">
    <location>
        <begin position="12"/>
        <end position="22"/>
    </location>
</feature>
<feature type="compositionally biased region" description="Basic residues" evidence="5">
    <location>
        <begin position="35"/>
        <end position="44"/>
    </location>
</feature>
<feature type="binding site" evidence="4">
    <location>
        <position position="368"/>
    </location>
    <ligand>
        <name>Fe cation</name>
        <dbReference type="ChEBI" id="CHEBI:24875"/>
        <note>catalytic</note>
    </ligand>
</feature>
<feature type="binding site" evidence="4">
    <location>
        <position position="370"/>
    </location>
    <ligand>
        <name>Fe cation</name>
        <dbReference type="ChEBI" id="CHEBI:24875"/>
        <note>catalytic</note>
    </ligand>
</feature>
<feature type="binding site" evidence="4">
    <location>
        <position position="433"/>
    </location>
    <ligand>
        <name>Fe cation</name>
        <dbReference type="ChEBI" id="CHEBI:24875"/>
        <note>catalytic</note>
    </ligand>
</feature>
<feature type="modified residue" description="N-acetylmethionine" evidence="2">
    <location>
        <position position="1"/>
    </location>
</feature>
<feature type="modified residue" description="Phosphoserine" evidence="1">
    <location>
        <position position="61"/>
    </location>
</feature>
<feature type="modified residue" description="Phosphoserine" evidence="1">
    <location>
        <position position="64"/>
    </location>
</feature>
<feature type="modified residue" description="Phosphoserine" evidence="2">
    <location>
        <position position="108"/>
    </location>
</feature>
<evidence type="ECO:0000250" key="1">
    <source>
        <dbReference type="UniProtKB" id="D3ZU57"/>
    </source>
</evidence>
<evidence type="ECO:0000250" key="2">
    <source>
        <dbReference type="UniProtKB" id="Q9H6W3"/>
    </source>
</evidence>
<evidence type="ECO:0000250" key="3">
    <source>
        <dbReference type="UniProtKB" id="Q9JJF3"/>
    </source>
</evidence>
<evidence type="ECO:0000255" key="4">
    <source>
        <dbReference type="PROSITE-ProRule" id="PRU00538"/>
    </source>
</evidence>
<evidence type="ECO:0000256" key="5">
    <source>
        <dbReference type="SAM" id="MobiDB-lite"/>
    </source>
</evidence>
<evidence type="ECO:0000305" key="6"/>
<gene>
    <name type="primary">RIOX1</name>
    <name type="synonym">MAPJD</name>
    <name type="synonym">NO66</name>
</gene>
<protein>
    <recommendedName>
        <fullName>Ribosomal oxygenase 1</fullName>
    </recommendedName>
    <alternativeName>
        <fullName>Bifunctional lysine-specific demethylase and histidyl-hydroxylase NO66</fullName>
        <ecNumber evidence="3">1.14.11.27</ecNumber>
        <ecNumber evidence="3">1.14.11.79</ecNumber>
    </alternativeName>
    <alternativeName>
        <fullName>Histone lysine demethylase NO66</fullName>
    </alternativeName>
</protein>
<comment type="function">
    <text evidence="2 3">Oxygenase that can act as both a histone lysine demethylase and a ribosomal histidine hydroxylase (By similarity). Specifically demethylates 'Lys-4' (H3K4me) and 'Lys-36' (H3K36me) of histone H3, thereby playing a central role in histone code. Preferentially demethylates trimethylated H3 'Lys-4' (H3K4me3) and monomethylated H3 'Lys-4' (H3K4me1) residues, while it has weaker activity for dimethylated H3 'Lys-36' (H3K36me2). Acts as a regulator of osteoblast differentiation via its interaction with SP7/OSX by demethylating H3K4me and H3K36me, thereby inhibiting SP7/OSX-mediated promoter activation. Also catalyzes demethylation of non-histone proteins, such as CGAS: demethylation of monomethylated CGAS promotes interaction between CGAS and PARP1, followed by PARP1 inactivation (By similarity). Also catalyzes the hydroxylation of 60S ribosomal protein L8 on 'His-216', thereby playing a role in ribosome biogenesis. Participates in MYC-induced transcriptional activation (By similarity).</text>
</comment>
<comment type="catalytic activity">
    <reaction evidence="3">
        <text>N(6),N(6)-dimethyl-L-lysyl(36)-[histone H3] + 2 2-oxoglutarate + 2 O2 = L-lysyl(36)-[histone H3] + 2 formaldehyde + 2 succinate + 2 CO2</text>
        <dbReference type="Rhea" id="RHEA:42032"/>
        <dbReference type="Rhea" id="RHEA-COMP:9785"/>
        <dbReference type="Rhea" id="RHEA-COMP:9787"/>
        <dbReference type="ChEBI" id="CHEBI:15379"/>
        <dbReference type="ChEBI" id="CHEBI:16526"/>
        <dbReference type="ChEBI" id="CHEBI:16810"/>
        <dbReference type="ChEBI" id="CHEBI:16842"/>
        <dbReference type="ChEBI" id="CHEBI:29969"/>
        <dbReference type="ChEBI" id="CHEBI:30031"/>
        <dbReference type="ChEBI" id="CHEBI:61976"/>
        <dbReference type="EC" id="1.14.11.27"/>
    </reaction>
    <physiologicalReaction direction="left-to-right" evidence="3">
        <dbReference type="Rhea" id="RHEA:42033"/>
    </physiologicalReaction>
</comment>
<comment type="catalytic activity">
    <reaction evidence="2">
        <text>N(6)-methyl-L-lysyl-[protein] + 2-oxoglutarate + O2 = L-lysyl-[protein] + formaldehyde + succinate + CO2</text>
        <dbReference type="Rhea" id="RHEA:60924"/>
        <dbReference type="Rhea" id="RHEA-COMP:9752"/>
        <dbReference type="Rhea" id="RHEA-COMP:13053"/>
        <dbReference type="ChEBI" id="CHEBI:15379"/>
        <dbReference type="ChEBI" id="CHEBI:16526"/>
        <dbReference type="ChEBI" id="CHEBI:16810"/>
        <dbReference type="ChEBI" id="CHEBI:16842"/>
        <dbReference type="ChEBI" id="CHEBI:29969"/>
        <dbReference type="ChEBI" id="CHEBI:30031"/>
        <dbReference type="ChEBI" id="CHEBI:61929"/>
    </reaction>
    <physiologicalReaction direction="left-to-right" evidence="2">
        <dbReference type="Rhea" id="RHEA:60925"/>
    </physiologicalReaction>
</comment>
<comment type="catalytic activity">
    <reaction evidence="2">
        <text>L-histidyl-[protein] + 2-oxoglutarate + O2 = (3S)-3-hydroxy-L-histidyl-[protein] + succinate + CO2</text>
        <dbReference type="Rhea" id="RHEA:54256"/>
        <dbReference type="Rhea" id="RHEA-COMP:9745"/>
        <dbReference type="Rhea" id="RHEA-COMP:13840"/>
        <dbReference type="ChEBI" id="CHEBI:15379"/>
        <dbReference type="ChEBI" id="CHEBI:16526"/>
        <dbReference type="ChEBI" id="CHEBI:16810"/>
        <dbReference type="ChEBI" id="CHEBI:29979"/>
        <dbReference type="ChEBI" id="CHEBI:30031"/>
        <dbReference type="ChEBI" id="CHEBI:138021"/>
        <dbReference type="EC" id="1.14.11.79"/>
    </reaction>
    <physiologicalReaction direction="left-to-right" evidence="2">
        <dbReference type="Rhea" id="RHEA:54257"/>
    </physiologicalReaction>
</comment>
<comment type="cofactor">
    <cofactor evidence="3">
        <name>Fe(2+)</name>
        <dbReference type="ChEBI" id="CHEBI:29033"/>
    </cofactor>
    <text evidence="3">Binds 1 Fe(2+) ion per subunit.</text>
</comment>
<comment type="subunit">
    <text evidence="2 3">Interacts with SP7/OSX; the interaction is direct (By similarity). Interacts with MYC. Interacts with PHF19; leading to its recruitment to H3K36me3 sites (By similarity).</text>
</comment>
<comment type="subcellular location">
    <subcellularLocation>
        <location evidence="2">Nucleus</location>
        <location evidence="2">Nucleolus</location>
    </subcellularLocation>
    <subcellularLocation>
        <location evidence="2">Nucleus</location>
        <location evidence="2">Nucleoplasm</location>
    </subcellularLocation>
    <text evidence="2">Granular part of nucleoli. Nucleoplasm, nucleoplasmic foci, some of them associated with nucleoli.</text>
</comment>
<comment type="similarity">
    <text evidence="6">Belongs to the ROX family. NO66 subfamily.</text>
</comment>
<dbReference type="EC" id="1.14.11.27" evidence="3"/>
<dbReference type="EC" id="1.14.11.79" evidence="3"/>
<dbReference type="EMBL" id="BC142386">
    <property type="protein sequence ID" value="AAI42387.1"/>
    <property type="molecule type" value="mRNA"/>
</dbReference>
<dbReference type="RefSeq" id="NP_001093172.1">
    <property type="nucleotide sequence ID" value="NM_001099702.1"/>
</dbReference>
<dbReference type="SMR" id="A5PK74"/>
<dbReference type="FunCoup" id="A5PK74">
    <property type="interactions" value="3005"/>
</dbReference>
<dbReference type="STRING" id="9913.ENSBTAP00000054807"/>
<dbReference type="PaxDb" id="9913-ENSBTAP00000054807"/>
<dbReference type="Ensembl" id="ENSBTAT00000094896.1">
    <property type="protein sequence ID" value="ENSBTAP00000099374.1"/>
    <property type="gene ID" value="ENSBTAG00000025372.6"/>
</dbReference>
<dbReference type="Ensembl" id="ENSBTAT00000122212.1">
    <property type="protein sequence ID" value="ENSBTAP00000093221.1"/>
    <property type="gene ID" value="ENSBTAG00000025372.6"/>
</dbReference>
<dbReference type="GeneID" id="511031"/>
<dbReference type="KEGG" id="bta:511031"/>
<dbReference type="CTD" id="79697"/>
<dbReference type="VEuPathDB" id="HostDB:ENSBTAG00000025372"/>
<dbReference type="VGNC" id="VGNC:55141">
    <property type="gene designation" value="RIOX1"/>
</dbReference>
<dbReference type="eggNOG" id="KOG3706">
    <property type="taxonomic scope" value="Eukaryota"/>
</dbReference>
<dbReference type="GeneTree" id="ENSGT00390000000083"/>
<dbReference type="InParanoid" id="A5PK74"/>
<dbReference type="OMA" id="YLEYMGV"/>
<dbReference type="OrthoDB" id="425950at2759"/>
<dbReference type="Reactome" id="R-BTA-9629569">
    <property type="pathway name" value="Protein hydroxylation"/>
</dbReference>
<dbReference type="Proteomes" id="UP000009136">
    <property type="component" value="Chromosome 10"/>
</dbReference>
<dbReference type="Bgee" id="ENSBTAG00000025372">
    <property type="expression patterns" value="Expressed in rumen papilla and 107 other cell types or tissues"/>
</dbReference>
<dbReference type="GO" id="GO:0005730">
    <property type="term" value="C:nucleolus"/>
    <property type="evidence" value="ECO:0000318"/>
    <property type="project" value="GO_Central"/>
</dbReference>
<dbReference type="GO" id="GO:0005654">
    <property type="term" value="C:nucleoplasm"/>
    <property type="evidence" value="ECO:0007669"/>
    <property type="project" value="UniProtKB-SubCell"/>
</dbReference>
<dbReference type="GO" id="GO:0005634">
    <property type="term" value="C:nucleus"/>
    <property type="evidence" value="ECO:0000250"/>
    <property type="project" value="UniProtKB"/>
</dbReference>
<dbReference type="GO" id="GO:0016706">
    <property type="term" value="F:2-oxoglutarate-dependent dioxygenase activity"/>
    <property type="evidence" value="ECO:0000250"/>
    <property type="project" value="UniProtKB"/>
</dbReference>
<dbReference type="GO" id="GO:0051864">
    <property type="term" value="F:histone H3K36 demethylase activity"/>
    <property type="evidence" value="ECO:0000250"/>
    <property type="project" value="UniProtKB"/>
</dbReference>
<dbReference type="GO" id="GO:0140680">
    <property type="term" value="F:histone H3K36me/H3K36me2 demethylase activity"/>
    <property type="evidence" value="ECO:0007669"/>
    <property type="project" value="UniProtKB-EC"/>
</dbReference>
<dbReference type="GO" id="GO:0032453">
    <property type="term" value="F:histone H3K4 demethylase activity"/>
    <property type="evidence" value="ECO:0000318"/>
    <property type="project" value="GO_Central"/>
</dbReference>
<dbReference type="GO" id="GO:0034647">
    <property type="term" value="F:histone H3K4me/H3K4me2/H3K4me3 demethylase activity"/>
    <property type="evidence" value="ECO:0000250"/>
    <property type="project" value="UniProtKB"/>
</dbReference>
<dbReference type="GO" id="GO:0005506">
    <property type="term" value="F:iron ion binding"/>
    <property type="evidence" value="ECO:0000250"/>
    <property type="project" value="UniProtKB"/>
</dbReference>
<dbReference type="GO" id="GO:0036139">
    <property type="term" value="F:peptidyl-histidine dioxygenase activity"/>
    <property type="evidence" value="ECO:0000250"/>
    <property type="project" value="UniProtKB"/>
</dbReference>
<dbReference type="GO" id="GO:0140457">
    <property type="term" value="F:protein demethylase activity"/>
    <property type="evidence" value="ECO:0000250"/>
    <property type="project" value="UniProtKB"/>
</dbReference>
<dbReference type="GO" id="GO:0045892">
    <property type="term" value="P:negative regulation of DNA-templated transcription"/>
    <property type="evidence" value="ECO:0000250"/>
    <property type="project" value="UniProtKB"/>
</dbReference>
<dbReference type="GO" id="GO:0045668">
    <property type="term" value="P:negative regulation of osteoblast differentiation"/>
    <property type="evidence" value="ECO:0000250"/>
    <property type="project" value="UniProtKB"/>
</dbReference>
<dbReference type="GO" id="GO:0006282">
    <property type="term" value="P:regulation of DNA repair"/>
    <property type="evidence" value="ECO:0007669"/>
    <property type="project" value="Ensembl"/>
</dbReference>
<dbReference type="FunFam" id="2.60.120.650:FF:000013">
    <property type="entry name" value="Ribosomal oxygenase 1"/>
    <property type="match status" value="1"/>
</dbReference>
<dbReference type="FunFam" id="1.10.10.1500:FF:000001">
    <property type="entry name" value="ribosomal oxygenase 1 isoform X1"/>
    <property type="match status" value="1"/>
</dbReference>
<dbReference type="FunFam" id="3.90.930.40:FF:000001">
    <property type="entry name" value="ribosomal oxygenase 1 isoform X1"/>
    <property type="match status" value="1"/>
</dbReference>
<dbReference type="Gene3D" id="3.90.930.40">
    <property type="match status" value="1"/>
</dbReference>
<dbReference type="Gene3D" id="2.60.120.650">
    <property type="entry name" value="Cupin"/>
    <property type="match status" value="1"/>
</dbReference>
<dbReference type="Gene3D" id="1.10.10.1500">
    <property type="entry name" value="JmjC domain-containing ribosomal oxygenase (ROX), dimer domain"/>
    <property type="match status" value="1"/>
</dbReference>
<dbReference type="InterPro" id="IPR003347">
    <property type="entry name" value="JmjC_dom"/>
</dbReference>
<dbReference type="InterPro" id="IPR039994">
    <property type="entry name" value="NO66-like"/>
</dbReference>
<dbReference type="InterPro" id="IPR049043">
    <property type="entry name" value="RIOX1/NO66-like_C_WH"/>
</dbReference>
<dbReference type="PANTHER" id="PTHR13096">
    <property type="entry name" value="MINA53 MYC INDUCED NUCLEAR ANTIGEN"/>
    <property type="match status" value="1"/>
</dbReference>
<dbReference type="PANTHER" id="PTHR13096:SF8">
    <property type="entry name" value="RIBOSOMAL OXYGENASE 1"/>
    <property type="match status" value="1"/>
</dbReference>
<dbReference type="Pfam" id="PF08007">
    <property type="entry name" value="JmjC_2"/>
    <property type="match status" value="1"/>
</dbReference>
<dbReference type="Pfam" id="PF21233">
    <property type="entry name" value="RIOX1_C_WH"/>
    <property type="match status" value="1"/>
</dbReference>
<dbReference type="SUPFAM" id="SSF51197">
    <property type="entry name" value="Clavaminate synthase-like"/>
    <property type="match status" value="1"/>
</dbReference>
<dbReference type="PROSITE" id="PS51184">
    <property type="entry name" value="JMJC"/>
    <property type="match status" value="1"/>
</dbReference>
<organism>
    <name type="scientific">Bos taurus</name>
    <name type="common">Bovine</name>
    <dbReference type="NCBI Taxonomy" id="9913"/>
    <lineage>
        <taxon>Eukaryota</taxon>
        <taxon>Metazoa</taxon>
        <taxon>Chordata</taxon>
        <taxon>Craniata</taxon>
        <taxon>Vertebrata</taxon>
        <taxon>Euteleostomi</taxon>
        <taxon>Mammalia</taxon>
        <taxon>Eutheria</taxon>
        <taxon>Laurasiatheria</taxon>
        <taxon>Artiodactyla</taxon>
        <taxon>Ruminantia</taxon>
        <taxon>Pecora</taxon>
        <taxon>Bovidae</taxon>
        <taxon>Bovinae</taxon>
        <taxon>Bos</taxon>
    </lineage>
</organism>
<proteinExistence type="evidence at transcript level"/>